<organism>
    <name type="scientific">Chlorobium chlorochromatii (strain CaD3)</name>
    <dbReference type="NCBI Taxonomy" id="340177"/>
    <lineage>
        <taxon>Bacteria</taxon>
        <taxon>Pseudomonadati</taxon>
        <taxon>Chlorobiota</taxon>
        <taxon>Chlorobiia</taxon>
        <taxon>Chlorobiales</taxon>
        <taxon>Chlorobiaceae</taxon>
        <taxon>Chlorobium/Pelodictyon group</taxon>
        <taxon>Chlorobium</taxon>
    </lineage>
</organism>
<accession>Q3AS33</accession>
<dbReference type="EC" id="2.7.7.60" evidence="1"/>
<dbReference type="EMBL" id="CP000108">
    <property type="protein sequence ID" value="ABB28192.1"/>
    <property type="molecule type" value="Genomic_DNA"/>
</dbReference>
<dbReference type="SMR" id="Q3AS33"/>
<dbReference type="STRING" id="340177.Cag_0929"/>
<dbReference type="KEGG" id="cch:Cag_0929"/>
<dbReference type="eggNOG" id="COG1211">
    <property type="taxonomic scope" value="Bacteria"/>
</dbReference>
<dbReference type="HOGENOM" id="CLU_061281_2_2_10"/>
<dbReference type="OrthoDB" id="9806837at2"/>
<dbReference type="UniPathway" id="UPA00056">
    <property type="reaction ID" value="UER00093"/>
</dbReference>
<dbReference type="GO" id="GO:0050518">
    <property type="term" value="F:2-C-methyl-D-erythritol 4-phosphate cytidylyltransferase activity"/>
    <property type="evidence" value="ECO:0007669"/>
    <property type="project" value="UniProtKB-UniRule"/>
</dbReference>
<dbReference type="GO" id="GO:0019288">
    <property type="term" value="P:isopentenyl diphosphate biosynthetic process, methylerythritol 4-phosphate pathway"/>
    <property type="evidence" value="ECO:0007669"/>
    <property type="project" value="UniProtKB-UniRule"/>
</dbReference>
<dbReference type="CDD" id="cd02516">
    <property type="entry name" value="CDP-ME_synthetase"/>
    <property type="match status" value="1"/>
</dbReference>
<dbReference type="FunFam" id="3.90.550.10:FF:000003">
    <property type="entry name" value="2-C-methyl-D-erythritol 4-phosphate cytidylyltransferase"/>
    <property type="match status" value="1"/>
</dbReference>
<dbReference type="Gene3D" id="3.90.550.10">
    <property type="entry name" value="Spore Coat Polysaccharide Biosynthesis Protein SpsA, Chain A"/>
    <property type="match status" value="1"/>
</dbReference>
<dbReference type="HAMAP" id="MF_00108">
    <property type="entry name" value="IspD"/>
    <property type="match status" value="1"/>
</dbReference>
<dbReference type="InterPro" id="IPR001228">
    <property type="entry name" value="IspD"/>
</dbReference>
<dbReference type="InterPro" id="IPR034683">
    <property type="entry name" value="IspD/TarI"/>
</dbReference>
<dbReference type="InterPro" id="IPR050088">
    <property type="entry name" value="IspD/TarI_cytidylyltransf_bact"/>
</dbReference>
<dbReference type="InterPro" id="IPR018294">
    <property type="entry name" value="ISPD_synthase_CS"/>
</dbReference>
<dbReference type="InterPro" id="IPR029044">
    <property type="entry name" value="Nucleotide-diphossugar_trans"/>
</dbReference>
<dbReference type="PANTHER" id="PTHR32125">
    <property type="entry name" value="2-C-METHYL-D-ERYTHRITOL 4-PHOSPHATE CYTIDYLYLTRANSFERASE, CHLOROPLASTIC"/>
    <property type="match status" value="1"/>
</dbReference>
<dbReference type="PANTHER" id="PTHR32125:SF4">
    <property type="entry name" value="2-C-METHYL-D-ERYTHRITOL 4-PHOSPHATE CYTIDYLYLTRANSFERASE, CHLOROPLASTIC"/>
    <property type="match status" value="1"/>
</dbReference>
<dbReference type="Pfam" id="PF01128">
    <property type="entry name" value="IspD"/>
    <property type="match status" value="1"/>
</dbReference>
<dbReference type="SUPFAM" id="SSF53448">
    <property type="entry name" value="Nucleotide-diphospho-sugar transferases"/>
    <property type="match status" value="1"/>
</dbReference>
<dbReference type="PROSITE" id="PS01295">
    <property type="entry name" value="ISPD"/>
    <property type="match status" value="1"/>
</dbReference>
<name>ISPD_CHLCH</name>
<gene>
    <name evidence="1" type="primary">ispD</name>
    <name type="ordered locus">Cag_0929</name>
</gene>
<proteinExistence type="inferred from homology"/>
<protein>
    <recommendedName>
        <fullName evidence="1">2-C-methyl-D-erythritol 4-phosphate cytidylyltransferase</fullName>
        <ecNumber evidence="1">2.7.7.60</ecNumber>
    </recommendedName>
    <alternativeName>
        <fullName evidence="1">4-diphosphocytidyl-2C-methyl-D-erythritol synthase</fullName>
    </alternativeName>
    <alternativeName>
        <fullName evidence="1">MEP cytidylyltransferase</fullName>
        <shortName evidence="1">MCT</shortName>
    </alternativeName>
</protein>
<reference key="1">
    <citation type="submission" date="2005-08" db="EMBL/GenBank/DDBJ databases">
        <title>Complete sequence of Chlorobium chlorochromatii CaD3.</title>
        <authorList>
            <consortium name="US DOE Joint Genome Institute"/>
            <person name="Copeland A."/>
            <person name="Lucas S."/>
            <person name="Lapidus A."/>
            <person name="Barry K."/>
            <person name="Detter J.C."/>
            <person name="Glavina T."/>
            <person name="Hammon N."/>
            <person name="Israni S."/>
            <person name="Pitluck S."/>
            <person name="Bryant D."/>
            <person name="Schmutz J."/>
            <person name="Larimer F."/>
            <person name="Land M."/>
            <person name="Kyrpides N."/>
            <person name="Ivanova N."/>
            <person name="Richardson P."/>
        </authorList>
    </citation>
    <scope>NUCLEOTIDE SEQUENCE [LARGE SCALE GENOMIC DNA]</scope>
    <source>
        <strain>CaD3</strain>
    </source>
</reference>
<sequence>MNATAIIAASGIGKRMKLANGGCKQMLEIGGFSVIYHTLKAFEQAPSIHNIYLATRAESIPLIQELAASANIGKLTAVVEGGKERQDSINNCIKAIEVKRHQSGVTPDVILVHDGARPFIQPEEIEEIARLSLLFGACVPATRPKDTIKFIGHDPEFFGETLDRNRLVQVQTPQGFRSELLMQAHQQAEAEGWYSTDDAALVERFFPQQLIKIFEMGYHNIKITTPEDILVAEAIYQQLQAHGNATSEAASAS</sequence>
<keyword id="KW-0414">Isoprene biosynthesis</keyword>
<keyword id="KW-0548">Nucleotidyltransferase</keyword>
<keyword id="KW-0808">Transferase</keyword>
<evidence type="ECO:0000255" key="1">
    <source>
        <dbReference type="HAMAP-Rule" id="MF_00108"/>
    </source>
</evidence>
<comment type="function">
    <text evidence="1">Catalyzes the formation of 4-diphosphocytidyl-2-C-methyl-D-erythritol from CTP and 2-C-methyl-D-erythritol 4-phosphate (MEP).</text>
</comment>
<comment type="catalytic activity">
    <reaction evidence="1">
        <text>2-C-methyl-D-erythritol 4-phosphate + CTP + H(+) = 4-CDP-2-C-methyl-D-erythritol + diphosphate</text>
        <dbReference type="Rhea" id="RHEA:13429"/>
        <dbReference type="ChEBI" id="CHEBI:15378"/>
        <dbReference type="ChEBI" id="CHEBI:33019"/>
        <dbReference type="ChEBI" id="CHEBI:37563"/>
        <dbReference type="ChEBI" id="CHEBI:57823"/>
        <dbReference type="ChEBI" id="CHEBI:58262"/>
        <dbReference type="EC" id="2.7.7.60"/>
    </reaction>
</comment>
<comment type="pathway">
    <text evidence="1">Isoprenoid biosynthesis; isopentenyl diphosphate biosynthesis via DXP pathway; isopentenyl diphosphate from 1-deoxy-D-xylulose 5-phosphate: step 2/6.</text>
</comment>
<comment type="similarity">
    <text evidence="1">Belongs to the IspD/TarI cytidylyltransferase family. IspD subfamily.</text>
</comment>
<feature type="chain" id="PRO_0000237783" description="2-C-methyl-D-erythritol 4-phosphate cytidylyltransferase">
    <location>
        <begin position="1"/>
        <end position="253"/>
    </location>
</feature>
<feature type="site" description="Transition state stabilizer" evidence="1">
    <location>
        <position position="15"/>
    </location>
</feature>
<feature type="site" description="Transition state stabilizer" evidence="1">
    <location>
        <position position="24"/>
    </location>
</feature>
<feature type="site" description="Positions MEP for the nucleophilic attack" evidence="1">
    <location>
        <position position="164"/>
    </location>
</feature>
<feature type="site" description="Positions MEP for the nucleophilic attack" evidence="1">
    <location>
        <position position="222"/>
    </location>
</feature>